<evidence type="ECO:0000255" key="1">
    <source>
        <dbReference type="HAMAP-Rule" id="MF_01187"/>
    </source>
</evidence>
<evidence type="ECO:0000305" key="2"/>
<sequence length="62" mass="6776">MLDPNLLDILVCPVSKAPLIYDEKTAELKCKASGLAYPVRDGIPVMLEEQARAMSDEEALSL</sequence>
<keyword id="KW-1185">Reference proteome</keyword>
<organism>
    <name type="scientific">Alcanivorax borkumensis (strain ATCC 700651 / DSM 11573 / NCIMB 13689 / SK2)</name>
    <dbReference type="NCBI Taxonomy" id="393595"/>
    <lineage>
        <taxon>Bacteria</taxon>
        <taxon>Pseudomonadati</taxon>
        <taxon>Pseudomonadota</taxon>
        <taxon>Gammaproteobacteria</taxon>
        <taxon>Oceanospirillales</taxon>
        <taxon>Alcanivoracaceae</taxon>
        <taxon>Alcanivorax</taxon>
    </lineage>
</organism>
<feature type="chain" id="PRO_0000291052" description="UPF0434 protein ABO_2103">
    <location>
        <begin position="1"/>
        <end position="62"/>
    </location>
</feature>
<dbReference type="EMBL" id="AM286690">
    <property type="protein sequence ID" value="CAL17551.1"/>
    <property type="status" value="ALT_INIT"/>
    <property type="molecule type" value="Genomic_DNA"/>
</dbReference>
<dbReference type="RefSeq" id="WP_035458796.1">
    <property type="nucleotide sequence ID" value="NC_008260.1"/>
</dbReference>
<dbReference type="SMR" id="Q0VMP7"/>
<dbReference type="STRING" id="393595.ABO_2103"/>
<dbReference type="KEGG" id="abo:ABO_2103"/>
<dbReference type="eggNOG" id="COG2835">
    <property type="taxonomic scope" value="Bacteria"/>
</dbReference>
<dbReference type="HOGENOM" id="CLU_155659_3_1_6"/>
<dbReference type="OrthoDB" id="9812205at2"/>
<dbReference type="Proteomes" id="UP000008871">
    <property type="component" value="Chromosome"/>
</dbReference>
<dbReference type="GO" id="GO:0005829">
    <property type="term" value="C:cytosol"/>
    <property type="evidence" value="ECO:0007669"/>
    <property type="project" value="TreeGrafter"/>
</dbReference>
<dbReference type="FunFam" id="2.20.25.10:FF:000002">
    <property type="entry name" value="UPF0434 protein YcaR"/>
    <property type="match status" value="1"/>
</dbReference>
<dbReference type="Gene3D" id="2.20.25.10">
    <property type="match status" value="1"/>
</dbReference>
<dbReference type="HAMAP" id="MF_01187">
    <property type="entry name" value="UPF0434"/>
    <property type="match status" value="1"/>
</dbReference>
<dbReference type="InterPro" id="IPR005651">
    <property type="entry name" value="Trm112-like"/>
</dbReference>
<dbReference type="PANTHER" id="PTHR33505:SF4">
    <property type="entry name" value="PROTEIN PREY, MITOCHONDRIAL"/>
    <property type="match status" value="1"/>
</dbReference>
<dbReference type="PANTHER" id="PTHR33505">
    <property type="entry name" value="ZGC:162634"/>
    <property type="match status" value="1"/>
</dbReference>
<dbReference type="Pfam" id="PF03966">
    <property type="entry name" value="Trm112p"/>
    <property type="match status" value="1"/>
</dbReference>
<dbReference type="SUPFAM" id="SSF158997">
    <property type="entry name" value="Trm112p-like"/>
    <property type="match status" value="1"/>
</dbReference>
<gene>
    <name type="ordered locus">ABO_2103</name>
</gene>
<reference key="1">
    <citation type="journal article" date="2006" name="Nat. Biotechnol.">
        <title>Genome sequence of the ubiquitous hydrocarbon-degrading marine bacterium Alcanivorax borkumensis.</title>
        <authorList>
            <person name="Schneiker S."/>
            <person name="Martins dos Santos V.A.P."/>
            <person name="Bartels D."/>
            <person name="Bekel T."/>
            <person name="Brecht M."/>
            <person name="Buhrmester J."/>
            <person name="Chernikova T.N."/>
            <person name="Denaro R."/>
            <person name="Ferrer M."/>
            <person name="Gertler C."/>
            <person name="Goesmann A."/>
            <person name="Golyshina O.V."/>
            <person name="Kaminski F."/>
            <person name="Khachane A.N."/>
            <person name="Lang S."/>
            <person name="Linke B."/>
            <person name="McHardy A.C."/>
            <person name="Meyer F."/>
            <person name="Nechitaylo T."/>
            <person name="Puehler A."/>
            <person name="Regenhardt D."/>
            <person name="Rupp O."/>
            <person name="Sabirova J.S."/>
            <person name="Selbitschka W."/>
            <person name="Yakimov M.M."/>
            <person name="Timmis K.N."/>
            <person name="Vorhoelter F.-J."/>
            <person name="Weidner S."/>
            <person name="Kaiser O."/>
            <person name="Golyshin P.N."/>
        </authorList>
    </citation>
    <scope>NUCLEOTIDE SEQUENCE [LARGE SCALE GENOMIC DNA]</scope>
    <source>
        <strain>ATCC 700651 / DSM 11573 / NCIMB 13689 / SK2</strain>
    </source>
</reference>
<comment type="similarity">
    <text evidence="1">Belongs to the UPF0434 family.</text>
</comment>
<comment type="sequence caution" evidence="2">
    <conflict type="erroneous initiation">
        <sequence resource="EMBL-CDS" id="CAL17551"/>
    </conflict>
</comment>
<accession>Q0VMP7</accession>
<proteinExistence type="inferred from homology"/>
<protein>
    <recommendedName>
        <fullName evidence="1">UPF0434 protein ABO_2103</fullName>
    </recommendedName>
</protein>
<name>Y2103_ALCBS</name>